<gene>
    <name type="primary">acg</name>
    <name type="ordered locus">Rv2032</name>
</gene>
<organism>
    <name type="scientific">Mycobacterium tuberculosis (strain ATCC 25618 / H37Rv)</name>
    <dbReference type="NCBI Taxonomy" id="83332"/>
    <lineage>
        <taxon>Bacteria</taxon>
        <taxon>Bacillati</taxon>
        <taxon>Actinomycetota</taxon>
        <taxon>Actinomycetes</taxon>
        <taxon>Mycobacteriales</taxon>
        <taxon>Mycobacteriaceae</taxon>
        <taxon>Mycobacterium</taxon>
        <taxon>Mycobacterium tuberculosis complex</taxon>
    </lineage>
</organism>
<accession>P9WIZ9</accession>
<accession>L0TB56</accession>
<accession>O53476</accession>
<accession>Q7D7L2</accession>
<reference key="1">
    <citation type="journal article" date="1998" name="Nature">
        <title>Deciphering the biology of Mycobacterium tuberculosis from the complete genome sequence.</title>
        <authorList>
            <person name="Cole S.T."/>
            <person name="Brosch R."/>
            <person name="Parkhill J."/>
            <person name="Garnier T."/>
            <person name="Churcher C.M."/>
            <person name="Harris D.E."/>
            <person name="Gordon S.V."/>
            <person name="Eiglmeier K."/>
            <person name="Gas S."/>
            <person name="Barry C.E. III"/>
            <person name="Tekaia F."/>
            <person name="Badcock K."/>
            <person name="Basham D."/>
            <person name="Brown D."/>
            <person name="Chillingworth T."/>
            <person name="Connor R."/>
            <person name="Davies R.M."/>
            <person name="Devlin K."/>
            <person name="Feltwell T."/>
            <person name="Gentles S."/>
            <person name="Hamlin N."/>
            <person name="Holroyd S."/>
            <person name="Hornsby T."/>
            <person name="Jagels K."/>
            <person name="Krogh A."/>
            <person name="McLean J."/>
            <person name="Moule S."/>
            <person name="Murphy L.D."/>
            <person name="Oliver S."/>
            <person name="Osborne J."/>
            <person name="Quail M.A."/>
            <person name="Rajandream M.A."/>
            <person name="Rogers J."/>
            <person name="Rutter S."/>
            <person name="Seeger K."/>
            <person name="Skelton S."/>
            <person name="Squares S."/>
            <person name="Squares R."/>
            <person name="Sulston J.E."/>
            <person name="Taylor K."/>
            <person name="Whitehead S."/>
            <person name="Barrell B.G."/>
        </authorList>
    </citation>
    <scope>NUCLEOTIDE SEQUENCE [LARGE SCALE GENOMIC DNA]</scope>
    <source>
        <strain>ATCC 25618 / H37Rv</strain>
    </source>
</reference>
<reference key="2">
    <citation type="journal article" date="2001" name="Proc. Natl. Acad. Sci. U.S.A.">
        <title>Regulation of the Mycobacterium tuberculosis hypoxic response gene encoding alpha -crystallin.</title>
        <authorList>
            <person name="Sherman D.R."/>
            <person name="Voskuil M."/>
            <person name="Schnappinger D."/>
            <person name="Liao R."/>
            <person name="Harrell M.I."/>
            <person name="Schoolnik G.K."/>
        </authorList>
    </citation>
    <scope>INDUCTION BY HYPOXIA</scope>
    <source>
        <strain>ATCC 25618 / H37Rv</strain>
    </source>
</reference>
<reference key="3">
    <citation type="journal article" date="2002" name="Infect. Immun.">
        <title>Identification of a Mycobacterium tuberculosis putative classical nitroreductase gene whose expression is coregulated with that of the acr gene within macrophages, in standing versus shaking cultures, and under low oxygen conditions.</title>
        <authorList>
            <person name="Purkayastha A."/>
            <person name="McCue L.A."/>
            <person name="McDonough K.A."/>
        </authorList>
    </citation>
    <scope>DISCUSSION OF SEQUENCE</scope>
</reference>
<reference key="4">
    <citation type="journal article" date="2003" name="J. Exp. Med.">
        <title>Inhibition of respiration by nitric oxide induces a Mycobacterium tuberculosis dormancy program.</title>
        <authorList>
            <person name="Voskuil M.I."/>
            <person name="Schnappinger D."/>
            <person name="Visconti K.C."/>
            <person name="Harrell M.I."/>
            <person name="Dolganov G.M."/>
            <person name="Sherman D.R."/>
            <person name="Schoolnik G.K."/>
        </authorList>
    </citation>
    <scope>INDUCTION BY NITRIC OXIDE (NO); BY HYPOXIA; IN MOUSE MODEL AND DORMANCY REGULON</scope>
</reference>
<reference key="5">
    <citation type="journal article" date="2008" name="Cell Host Microbe">
        <title>Mycobacterium tuberculosis senses host-derived carbon monoxide during macrophage infection.</title>
        <authorList>
            <person name="Shiloh M.U."/>
            <person name="Manzanillo P."/>
            <person name="Cox J.S."/>
        </authorList>
    </citation>
    <scope>INDUCTION BY CARBON MONOXIDE (CO)</scope>
    <source>
        <strain>ATCC 35801 / TMC 107 / Erdman</strain>
    </source>
</reference>
<reference key="6">
    <citation type="journal article" date="2008" name="J. Biol. Chem.">
        <title>Heme oxygenase-1-derived carbon monoxide induces the Mycobacterium tuberculosis dormancy regulon.</title>
        <authorList>
            <person name="Kumar A."/>
            <person name="Deshane J.S."/>
            <person name="Crossman D.K."/>
            <person name="Bolisetty S."/>
            <person name="Yan B.S."/>
            <person name="Kramnik I."/>
            <person name="Agarwal A."/>
            <person name="Steyn A.J."/>
        </authorList>
    </citation>
    <scope>INDUCTION BY CARBON MONOXIDE (CO)</scope>
    <scope>DORMANCY REGULON</scope>
    <source>
        <strain>ATCC 25618 / H37Rv</strain>
    </source>
</reference>
<reference key="7">
    <citation type="journal article" date="2011" name="Mol. Cell. Proteomics">
        <title>Proteogenomic analysis of Mycobacterium tuberculosis by high resolution mass spectrometry.</title>
        <authorList>
            <person name="Kelkar D.S."/>
            <person name="Kumar D."/>
            <person name="Kumar P."/>
            <person name="Balakrishnan L."/>
            <person name="Muthusamy B."/>
            <person name="Yadav A.K."/>
            <person name="Shrivastava P."/>
            <person name="Marimuthu A."/>
            <person name="Anand S."/>
            <person name="Sundaram H."/>
            <person name="Kingsbury R."/>
            <person name="Harsha H.C."/>
            <person name="Nair B."/>
            <person name="Prasad T.S."/>
            <person name="Chauhan D.S."/>
            <person name="Katoch K."/>
            <person name="Katoch V.M."/>
            <person name="Kumar P."/>
            <person name="Chaerkady R."/>
            <person name="Ramachandran S."/>
            <person name="Dash D."/>
            <person name="Pandey A."/>
        </authorList>
    </citation>
    <scope>IDENTIFICATION BY MASS SPECTROMETRY [LARGE SCALE ANALYSIS]</scope>
    <source>
        <strain>ATCC 25618 / H37Rv</strain>
    </source>
</reference>
<protein>
    <recommendedName>
        <fullName>Putative NAD(P)H nitroreductase acg</fullName>
        <ecNumber>1.-.-.-</ecNumber>
    </recommendedName>
</protein>
<name>ACG_MYCTU</name>
<evidence type="ECO:0000255" key="1"/>
<evidence type="ECO:0000269" key="2">
    <source>
    </source>
</evidence>
<evidence type="ECO:0000269" key="3">
    <source>
    </source>
</evidence>
<evidence type="ECO:0000269" key="4">
    <source>
    </source>
</evidence>
<evidence type="ECO:0000269" key="5">
    <source>
    </source>
</evidence>
<evidence type="ECO:0000305" key="6"/>
<sequence length="331" mass="36559">MPDTMVTTDVIKSAVQLACRAPSLHNSQPWRWIAEDHTVALFLDKDRVLYATDHSGREALLGCGAVLDHFRVAMAAAGTTANVERFPNPNDPLHLASIDFSPADFVTEGHRLRADAILLRRTDRLPFAEPPDWDLVESQLRTTVTADTVRIDVIADDMRPELAAASKLTESLRLYDSSYHAELFWWTGAFETSEGIPHSSLVSAAESDRVTFGRDFPVVANTDRRPEFGHDRSKVLVLSTYDNERASLLRCGEMLSAVLLDATMAGLATCTLTHITELHASRDLVAALIGQPATPQALVRVGLAPEMEEPPPATPRRPIDEVFHVRAKDHR</sequence>
<feature type="chain" id="PRO_0000392626" description="Putative NAD(P)H nitroreductase acg">
    <location>
        <begin position="1"/>
        <end position="331"/>
    </location>
</feature>
<feature type="binding site" evidence="1">
    <location>
        <begin position="28"/>
        <end position="32"/>
    </location>
    <ligand>
        <name>FMN</name>
        <dbReference type="ChEBI" id="CHEBI:58210"/>
    </ligand>
</feature>
<feature type="binding site" evidence="1">
    <location>
        <position position="316"/>
    </location>
    <ligand>
        <name>FMN</name>
        <dbReference type="ChEBI" id="CHEBI:58210"/>
    </ligand>
</feature>
<dbReference type="EC" id="1.-.-.-"/>
<dbReference type="EMBL" id="AL123456">
    <property type="protein sequence ID" value="CCP44805.1"/>
    <property type="molecule type" value="Genomic_DNA"/>
</dbReference>
<dbReference type="PIR" id="G70942">
    <property type="entry name" value="G70942"/>
</dbReference>
<dbReference type="RefSeq" id="NP_216548.1">
    <property type="nucleotide sequence ID" value="NC_000962.3"/>
</dbReference>
<dbReference type="RefSeq" id="WP_003410193.1">
    <property type="nucleotide sequence ID" value="NZ_NVQJ01000046.1"/>
</dbReference>
<dbReference type="SMR" id="P9WIZ9"/>
<dbReference type="STRING" id="83332.Rv2032"/>
<dbReference type="PaxDb" id="83332-Rv2032"/>
<dbReference type="DNASU" id="887582"/>
<dbReference type="GeneID" id="887582"/>
<dbReference type="KEGG" id="mtu:Rv2032"/>
<dbReference type="KEGG" id="mtv:RVBD_2032"/>
<dbReference type="TubercuList" id="Rv2032"/>
<dbReference type="eggNOG" id="COG0778">
    <property type="taxonomic scope" value="Bacteria"/>
</dbReference>
<dbReference type="InParanoid" id="P9WIZ9"/>
<dbReference type="OrthoDB" id="8156917at2"/>
<dbReference type="PhylomeDB" id="P9WIZ9"/>
<dbReference type="Proteomes" id="UP000001584">
    <property type="component" value="Chromosome"/>
</dbReference>
<dbReference type="GO" id="GO:0005829">
    <property type="term" value="C:cytosol"/>
    <property type="evidence" value="ECO:0007005"/>
    <property type="project" value="MTBBASE"/>
</dbReference>
<dbReference type="GO" id="GO:0009274">
    <property type="term" value="C:peptidoglycan-based cell wall"/>
    <property type="evidence" value="ECO:0007005"/>
    <property type="project" value="MTBBASE"/>
</dbReference>
<dbReference type="GO" id="GO:0005886">
    <property type="term" value="C:plasma membrane"/>
    <property type="evidence" value="ECO:0007005"/>
    <property type="project" value="MTBBASE"/>
</dbReference>
<dbReference type="GO" id="GO:0016491">
    <property type="term" value="F:oxidoreductase activity"/>
    <property type="evidence" value="ECO:0000318"/>
    <property type="project" value="GO_Central"/>
</dbReference>
<dbReference type="Gene3D" id="3.40.109.10">
    <property type="entry name" value="NADH Oxidase"/>
    <property type="match status" value="2"/>
</dbReference>
<dbReference type="InterPro" id="IPR000415">
    <property type="entry name" value="Nitroreductase-like"/>
</dbReference>
<dbReference type="InterPro" id="IPR050627">
    <property type="entry name" value="Nitroreductase/BluB"/>
</dbReference>
<dbReference type="NCBIfam" id="NF047509">
    <property type="entry name" value="Rv3131_FMN_oxido"/>
    <property type="match status" value="1"/>
</dbReference>
<dbReference type="PANTHER" id="PTHR23026:SF123">
    <property type="entry name" value="NAD(P)H NITROREDUCTASE RV3131-RELATED"/>
    <property type="match status" value="1"/>
</dbReference>
<dbReference type="PANTHER" id="PTHR23026">
    <property type="entry name" value="NADPH NITROREDUCTASE"/>
    <property type="match status" value="1"/>
</dbReference>
<dbReference type="SUPFAM" id="SSF55469">
    <property type="entry name" value="FMN-dependent nitroreductase-like"/>
    <property type="match status" value="2"/>
</dbReference>
<comment type="cofactor">
    <cofactor evidence="6">
        <name>FMN</name>
        <dbReference type="ChEBI" id="CHEBI:58210"/>
    </cofactor>
</comment>
<comment type="induction">
    <text evidence="2 3 4 5">A member of the dormancy regulon. Induced in response to reduced oxygen tension (hypoxia), low levels of nitric oxide (NO) and carbon monoxide (CO). It is hoped that this regulon will give insight into the latent, or dormant phase of infection. Induced in C57BL/6 mouse lungs 3 weeks after low dose aerosol infection with H37Rv bacteria.</text>
</comment>
<comment type="similarity">
    <text evidence="6">Belongs to the nitroreductase family.</text>
</comment>
<proteinExistence type="evidence at protein level"/>
<keyword id="KW-0285">Flavoprotein</keyword>
<keyword id="KW-0288">FMN</keyword>
<keyword id="KW-0520">NAD</keyword>
<keyword id="KW-0521">NADP</keyword>
<keyword id="KW-0560">Oxidoreductase</keyword>
<keyword id="KW-1185">Reference proteome</keyword>